<gene>
    <name evidence="1" type="primary">rpmA</name>
    <name type="ordered locus">HEAR2786</name>
</gene>
<protein>
    <recommendedName>
        <fullName evidence="1">Large ribosomal subunit protein bL27</fullName>
    </recommendedName>
    <alternativeName>
        <fullName evidence="3">50S ribosomal protein L27</fullName>
    </alternativeName>
</protein>
<accession>A4G8R5</accession>
<reference key="1">
    <citation type="journal article" date="2007" name="PLoS Genet.">
        <title>A tale of two oxidation states: bacterial colonization of arsenic-rich environments.</title>
        <authorList>
            <person name="Muller D."/>
            <person name="Medigue C."/>
            <person name="Koechler S."/>
            <person name="Barbe V."/>
            <person name="Barakat M."/>
            <person name="Talla E."/>
            <person name="Bonnefoy V."/>
            <person name="Krin E."/>
            <person name="Arsene-Ploetze F."/>
            <person name="Carapito C."/>
            <person name="Chandler M."/>
            <person name="Cournoyer B."/>
            <person name="Cruveiller S."/>
            <person name="Dossat C."/>
            <person name="Duval S."/>
            <person name="Heymann M."/>
            <person name="Leize E."/>
            <person name="Lieutaud A."/>
            <person name="Lievremont D."/>
            <person name="Makita Y."/>
            <person name="Mangenot S."/>
            <person name="Nitschke W."/>
            <person name="Ortet P."/>
            <person name="Perdrial N."/>
            <person name="Schoepp B."/>
            <person name="Siguier P."/>
            <person name="Simeonova D.D."/>
            <person name="Rouy Z."/>
            <person name="Segurens B."/>
            <person name="Turlin E."/>
            <person name="Vallenet D."/>
            <person name="van Dorsselaer A."/>
            <person name="Weiss S."/>
            <person name="Weissenbach J."/>
            <person name="Lett M.-C."/>
            <person name="Danchin A."/>
            <person name="Bertin P.N."/>
        </authorList>
    </citation>
    <scope>NUCLEOTIDE SEQUENCE [LARGE SCALE GENOMIC DNA]</scope>
    <source>
        <strain>ULPAs1</strain>
    </source>
</reference>
<proteinExistence type="inferred from homology"/>
<name>RL27_HERAR</name>
<keyword id="KW-1185">Reference proteome</keyword>
<keyword id="KW-0687">Ribonucleoprotein</keyword>
<keyword id="KW-0689">Ribosomal protein</keyword>
<organism>
    <name type="scientific">Herminiimonas arsenicoxydans</name>
    <dbReference type="NCBI Taxonomy" id="204773"/>
    <lineage>
        <taxon>Bacteria</taxon>
        <taxon>Pseudomonadati</taxon>
        <taxon>Pseudomonadota</taxon>
        <taxon>Betaproteobacteria</taxon>
        <taxon>Burkholderiales</taxon>
        <taxon>Oxalobacteraceae</taxon>
        <taxon>Herminiimonas</taxon>
    </lineage>
</organism>
<feature type="chain" id="PRO_1000017498" description="Large ribosomal subunit protein bL27">
    <location>
        <begin position="1"/>
        <end position="85"/>
    </location>
</feature>
<feature type="region of interest" description="Disordered" evidence="2">
    <location>
        <begin position="1"/>
        <end position="20"/>
    </location>
</feature>
<evidence type="ECO:0000255" key="1">
    <source>
        <dbReference type="HAMAP-Rule" id="MF_00539"/>
    </source>
</evidence>
<evidence type="ECO:0000256" key="2">
    <source>
        <dbReference type="SAM" id="MobiDB-lite"/>
    </source>
</evidence>
<evidence type="ECO:0000305" key="3"/>
<dbReference type="EMBL" id="CU207211">
    <property type="protein sequence ID" value="CAL62902.1"/>
    <property type="molecule type" value="Genomic_DNA"/>
</dbReference>
<dbReference type="SMR" id="A4G8R5"/>
<dbReference type="STRING" id="204773.HEAR2786"/>
<dbReference type="KEGG" id="har:HEAR2786"/>
<dbReference type="eggNOG" id="COG0211">
    <property type="taxonomic scope" value="Bacteria"/>
</dbReference>
<dbReference type="HOGENOM" id="CLU_095424_4_1_4"/>
<dbReference type="OrthoDB" id="9803474at2"/>
<dbReference type="Proteomes" id="UP000006697">
    <property type="component" value="Chromosome"/>
</dbReference>
<dbReference type="GO" id="GO:0022625">
    <property type="term" value="C:cytosolic large ribosomal subunit"/>
    <property type="evidence" value="ECO:0007669"/>
    <property type="project" value="TreeGrafter"/>
</dbReference>
<dbReference type="GO" id="GO:0003735">
    <property type="term" value="F:structural constituent of ribosome"/>
    <property type="evidence" value="ECO:0007669"/>
    <property type="project" value="InterPro"/>
</dbReference>
<dbReference type="GO" id="GO:0006412">
    <property type="term" value="P:translation"/>
    <property type="evidence" value="ECO:0007669"/>
    <property type="project" value="UniProtKB-UniRule"/>
</dbReference>
<dbReference type="FunFam" id="2.40.50.100:FF:000020">
    <property type="entry name" value="50S ribosomal protein L27"/>
    <property type="match status" value="1"/>
</dbReference>
<dbReference type="Gene3D" id="2.40.50.100">
    <property type="match status" value="1"/>
</dbReference>
<dbReference type="HAMAP" id="MF_00539">
    <property type="entry name" value="Ribosomal_bL27"/>
    <property type="match status" value="1"/>
</dbReference>
<dbReference type="InterPro" id="IPR001684">
    <property type="entry name" value="Ribosomal_bL27"/>
</dbReference>
<dbReference type="InterPro" id="IPR018261">
    <property type="entry name" value="Ribosomal_bL27_CS"/>
</dbReference>
<dbReference type="NCBIfam" id="TIGR00062">
    <property type="entry name" value="L27"/>
    <property type="match status" value="1"/>
</dbReference>
<dbReference type="PANTHER" id="PTHR15893:SF0">
    <property type="entry name" value="LARGE RIBOSOMAL SUBUNIT PROTEIN BL27M"/>
    <property type="match status" value="1"/>
</dbReference>
<dbReference type="PANTHER" id="PTHR15893">
    <property type="entry name" value="RIBOSOMAL PROTEIN L27"/>
    <property type="match status" value="1"/>
</dbReference>
<dbReference type="Pfam" id="PF01016">
    <property type="entry name" value="Ribosomal_L27"/>
    <property type="match status" value="1"/>
</dbReference>
<dbReference type="PRINTS" id="PR00063">
    <property type="entry name" value="RIBOSOMALL27"/>
</dbReference>
<dbReference type="SUPFAM" id="SSF110324">
    <property type="entry name" value="Ribosomal L27 protein-like"/>
    <property type="match status" value="1"/>
</dbReference>
<dbReference type="PROSITE" id="PS00831">
    <property type="entry name" value="RIBOSOMAL_L27"/>
    <property type="match status" value="1"/>
</dbReference>
<comment type="similarity">
    <text evidence="1">Belongs to the bacterial ribosomal protein bL27 family.</text>
</comment>
<sequence>MAHKKGGGTTRNGRDSESKRLGVKVYGGQVINAGGIIIRQRGTKVHPGENVGMGKDHTLFALTDGKVAFVIKGALQRQYVTVVPA</sequence>